<evidence type="ECO:0000250" key="1"/>
<evidence type="ECO:0000250" key="2">
    <source>
        <dbReference type="UniProtKB" id="P40563"/>
    </source>
</evidence>
<evidence type="ECO:0000256" key="3">
    <source>
        <dbReference type="SAM" id="MobiDB-lite"/>
    </source>
</evidence>
<evidence type="ECO:0000305" key="4"/>
<reference key="1">
    <citation type="journal article" date="2007" name="Proc. Natl. Acad. Sci. U.S.A.">
        <title>Genome sequencing and comparative analysis of Saccharomyces cerevisiae strain YJM789.</title>
        <authorList>
            <person name="Wei W."/>
            <person name="McCusker J.H."/>
            <person name="Hyman R.W."/>
            <person name="Jones T."/>
            <person name="Ning Y."/>
            <person name="Cao Z."/>
            <person name="Gu Z."/>
            <person name="Bruno D."/>
            <person name="Miranda M."/>
            <person name="Nguyen M."/>
            <person name="Wilhelmy J."/>
            <person name="Komp C."/>
            <person name="Tamse R."/>
            <person name="Wang X."/>
            <person name="Jia P."/>
            <person name="Luedi P."/>
            <person name="Oefner P.J."/>
            <person name="David L."/>
            <person name="Dietrich F.S."/>
            <person name="Li Y."/>
            <person name="Davis R.W."/>
            <person name="Steinmetz L.M."/>
        </authorList>
    </citation>
    <scope>NUCLEOTIDE SEQUENCE [LARGE SCALE GENOMIC DNA]</scope>
    <source>
        <strain>YJM789</strain>
    </source>
</reference>
<organism>
    <name type="scientific">Saccharomyces cerevisiae (strain YJM789)</name>
    <name type="common">Baker's yeast</name>
    <dbReference type="NCBI Taxonomy" id="307796"/>
    <lineage>
        <taxon>Eukaryota</taxon>
        <taxon>Fungi</taxon>
        <taxon>Dikarya</taxon>
        <taxon>Ascomycota</taxon>
        <taxon>Saccharomycotina</taxon>
        <taxon>Saccharomycetes</taxon>
        <taxon>Saccharomycetales</taxon>
        <taxon>Saccharomycetaceae</taxon>
        <taxon>Saccharomyces</taxon>
    </lineage>
</organism>
<gene>
    <name type="primary">AIM21</name>
    <name type="ORF">SCY_2787</name>
</gene>
<protein>
    <recommendedName>
        <fullName>Altered inheritance of mitochondria protein 21</fullName>
    </recommendedName>
</protein>
<sequence length="679" mass="74587">MPSEVTPKVPERPSRRKTSELFPLSGSESGDIKANSEPPTPAGTPNVPTRRPILKAKTMTSFESGMDQESLPKVPLQRPVRRSTTEELNNVMNNTSKELEEIESLISKHNIHSVSRKKSPTSVQEGKAAAIHQNGQRSASDNKTSTNPSPLEKNEHKGDEGNESAISPSNSVNKSNNEVTEHSDSEDLTEKQKVHAALDNEAGDGSHFEEKLIPGDMKVPVDVSKDVEEGSLNALPPSGITESDDKAEKFTKHPESSLEELQKHQEQQEEKIFQNPTDEESTTSLNEKQEGKDNMEVNSQPQGPSDTETVIAATSSNVPSQIASEEENDVPVIPRSRPKKDFEAHVQKEELPNTQEKLVSEECDSTLISTEEESKIPKIPSERPKRRAPPPVPKKPSSRIAAFQEMLQKQQQQDLHNNGNSSATTASADIAKKHTDSSITSDTTKADFTSKLNGLFALPGMVNPGQLPPSLEKKLSSPDTESKLGTQDQSQAKTGPLGGTRRGRGPRGRKLPSKVASVEKIEEDDNTNKIEIFNNWNVSSSFSKEKILMDTTPGEQAERALDEKSKSIPEEQREQSPNKMEAALCPFELDEQEKLPANAESDPLSQLPQTNAVGNRKAISEESLSPSEAIANRDQNDTTEIQEQQMEDQMEVDMERELSGGYEDVDSALHSEEASFHSL</sequence>
<proteinExistence type="inferred from homology"/>
<accession>A6ZVS1</accession>
<feature type="chain" id="PRO_0000399526" description="Altered inheritance of mitochondria protein 21">
    <location>
        <begin position="1"/>
        <end position="679"/>
    </location>
</feature>
<feature type="region of interest" description="Disordered" evidence="3">
    <location>
        <begin position="1"/>
        <end position="95"/>
    </location>
</feature>
<feature type="region of interest" description="Disordered" evidence="3">
    <location>
        <begin position="107"/>
        <end position="522"/>
    </location>
</feature>
<feature type="region of interest" description="Interaction with SH3 domain of ABP1" evidence="1">
    <location>
        <begin position="383"/>
        <end position="396"/>
    </location>
</feature>
<feature type="region of interest" description="Disordered" evidence="3">
    <location>
        <begin position="548"/>
        <end position="679"/>
    </location>
</feature>
<feature type="compositionally biased region" description="Basic and acidic residues" evidence="3">
    <location>
        <begin position="9"/>
        <end position="19"/>
    </location>
</feature>
<feature type="compositionally biased region" description="Polar residues" evidence="3">
    <location>
        <begin position="86"/>
        <end position="95"/>
    </location>
</feature>
<feature type="compositionally biased region" description="Basic residues" evidence="3">
    <location>
        <begin position="109"/>
        <end position="119"/>
    </location>
</feature>
<feature type="compositionally biased region" description="Polar residues" evidence="3">
    <location>
        <begin position="133"/>
        <end position="149"/>
    </location>
</feature>
<feature type="compositionally biased region" description="Polar residues" evidence="3">
    <location>
        <begin position="164"/>
        <end position="178"/>
    </location>
</feature>
<feature type="compositionally biased region" description="Basic and acidic residues" evidence="3">
    <location>
        <begin position="179"/>
        <end position="213"/>
    </location>
</feature>
<feature type="compositionally biased region" description="Basic and acidic residues" evidence="3">
    <location>
        <begin position="243"/>
        <end position="272"/>
    </location>
</feature>
<feature type="compositionally biased region" description="Polar residues" evidence="3">
    <location>
        <begin position="296"/>
        <end position="323"/>
    </location>
</feature>
<feature type="compositionally biased region" description="Basic and acidic residues" evidence="3">
    <location>
        <begin position="339"/>
        <end position="351"/>
    </location>
</feature>
<feature type="compositionally biased region" description="Basic and acidic residues" evidence="3">
    <location>
        <begin position="372"/>
        <end position="383"/>
    </location>
</feature>
<feature type="compositionally biased region" description="Polar residues" evidence="3">
    <location>
        <begin position="414"/>
        <end position="427"/>
    </location>
</feature>
<feature type="compositionally biased region" description="Polar residues" evidence="3">
    <location>
        <begin position="437"/>
        <end position="452"/>
    </location>
</feature>
<feature type="compositionally biased region" description="Basic and acidic residues" evidence="3">
    <location>
        <begin position="471"/>
        <end position="482"/>
    </location>
</feature>
<feature type="compositionally biased region" description="Polar residues" evidence="3">
    <location>
        <begin position="483"/>
        <end position="492"/>
    </location>
</feature>
<feature type="compositionally biased region" description="Basic residues" evidence="3">
    <location>
        <begin position="501"/>
        <end position="512"/>
    </location>
</feature>
<feature type="compositionally biased region" description="Basic and acidic residues" evidence="3">
    <location>
        <begin position="556"/>
        <end position="576"/>
    </location>
</feature>
<feature type="compositionally biased region" description="Polar residues" evidence="3">
    <location>
        <begin position="603"/>
        <end position="613"/>
    </location>
</feature>
<feature type="compositionally biased region" description="Basic and acidic residues" evidence="3">
    <location>
        <begin position="667"/>
        <end position="679"/>
    </location>
</feature>
<feature type="modified residue" description="Phosphothreonine" evidence="2">
    <location>
        <position position="18"/>
    </location>
</feature>
<feature type="modified residue" description="Phosphoserine" evidence="2">
    <location>
        <position position="36"/>
    </location>
</feature>
<feature type="modified residue" description="Phosphothreonine" evidence="2">
    <location>
        <position position="58"/>
    </location>
</feature>
<feature type="modified residue" description="Phosphoserine" evidence="2">
    <location>
        <position position="70"/>
    </location>
</feature>
<feature type="modified residue" description="Phosphothreonine" evidence="2">
    <location>
        <position position="85"/>
    </location>
</feature>
<feature type="modified residue" description="Phosphoserine" evidence="2">
    <location>
        <position position="104"/>
    </location>
</feature>
<feature type="modified residue" description="Phosphoserine" evidence="2">
    <location>
        <position position="183"/>
    </location>
</feature>
<feature type="modified residue" description="Phosphoserine" evidence="2">
    <location>
        <position position="206"/>
    </location>
</feature>
<feature type="modified residue" description="Phosphoserine" evidence="2">
    <location>
        <position position="231"/>
    </location>
</feature>
<feature type="modified residue" description="Phosphothreonine" evidence="2">
    <location>
        <position position="277"/>
    </location>
</feature>
<feature type="modified residue" description="Phosphoserine" evidence="2">
    <location>
        <position position="284"/>
    </location>
</feature>
<feature type="modified residue" description="Phosphoserine" evidence="2">
    <location>
        <position position="324"/>
    </location>
</feature>
<feature type="modified residue" description="Phosphothreonine" evidence="2">
    <location>
        <position position="552"/>
    </location>
</feature>
<feature type="modified residue" description="Phosphoserine" evidence="2">
    <location>
        <position position="576"/>
    </location>
</feature>
<feature type="modified residue" description="Phosphoserine" evidence="2">
    <location>
        <position position="620"/>
    </location>
</feature>
<feature type="modified residue" description="Phosphoserine" evidence="2">
    <location>
        <position position="623"/>
    </location>
</feature>
<feature type="modified residue" description="Phosphoserine" evidence="2">
    <location>
        <position position="625"/>
    </location>
</feature>
<feature type="modified residue" description="Phosphoserine" evidence="2">
    <location>
        <position position="627"/>
    </location>
</feature>
<feature type="modified residue" description="Phosphoserine" evidence="2">
    <location>
        <position position="667"/>
    </location>
</feature>
<feature type="modified residue" description="Phosphoserine" evidence="2">
    <location>
        <position position="671"/>
    </location>
</feature>
<feature type="modified residue" description="Phosphoserine" evidence="2">
    <location>
        <position position="675"/>
    </location>
</feature>
<feature type="modified residue" description="Phosphoserine" evidence="2">
    <location>
        <position position="678"/>
    </location>
</feature>
<keyword id="KW-0963">Cytoplasm</keyword>
<keyword id="KW-0206">Cytoskeleton</keyword>
<keyword id="KW-0597">Phosphoprotein</keyword>
<comment type="function">
    <text evidence="1">Involved in mitochondrial migration along actin filaments.</text>
</comment>
<comment type="subunit">
    <text evidence="1">Interacts with ribosomes. Interacts with ABP1.</text>
</comment>
<comment type="subcellular location">
    <subcellularLocation>
        <location evidence="1">Cytoplasm</location>
        <location evidence="1">Cytoskeleton</location>
        <location evidence="1">Actin patch</location>
    </subcellularLocation>
    <text evidence="1">Cortical actin patches. Localizes at the shmoo tip.</text>
</comment>
<comment type="similarity">
    <text evidence="4">Belongs to the AIM21 family.</text>
</comment>
<dbReference type="EMBL" id="AAFW02000124">
    <property type="protein sequence ID" value="EDN61496.1"/>
    <property type="molecule type" value="Genomic_DNA"/>
</dbReference>
<dbReference type="HOGENOM" id="CLU_418608_0_0_1"/>
<dbReference type="Proteomes" id="UP000007060">
    <property type="component" value="Unassembled WGS sequence"/>
</dbReference>
<dbReference type="GO" id="GO:0030479">
    <property type="term" value="C:actin cortical patch"/>
    <property type="evidence" value="ECO:0007669"/>
    <property type="project" value="UniProtKB-SubCell"/>
</dbReference>
<dbReference type="InterPro" id="IPR021582">
    <property type="entry name" value="Aim21"/>
</dbReference>
<dbReference type="Pfam" id="PF11489">
    <property type="entry name" value="Aim21"/>
    <property type="match status" value="1"/>
</dbReference>
<name>AIM21_YEAS7</name>